<protein>
    <recommendedName>
        <fullName evidence="1">Phosphoglucosamine mutase</fullName>
        <ecNumber evidence="1">5.4.2.10</ecNumber>
    </recommendedName>
</protein>
<feature type="chain" id="PRO_0000301276" description="Phosphoglucosamine mutase">
    <location>
        <begin position="1"/>
        <end position="454"/>
    </location>
</feature>
<feature type="active site" description="Phosphoserine intermediate" evidence="1">
    <location>
        <position position="104"/>
    </location>
</feature>
<feature type="binding site" description="via phosphate group" evidence="1">
    <location>
        <position position="104"/>
    </location>
    <ligand>
        <name>Mg(2+)</name>
        <dbReference type="ChEBI" id="CHEBI:18420"/>
    </ligand>
</feature>
<feature type="binding site" evidence="1">
    <location>
        <position position="241"/>
    </location>
    <ligand>
        <name>Mg(2+)</name>
        <dbReference type="ChEBI" id="CHEBI:18420"/>
    </ligand>
</feature>
<feature type="binding site" evidence="1">
    <location>
        <position position="243"/>
    </location>
    <ligand>
        <name>Mg(2+)</name>
        <dbReference type="ChEBI" id="CHEBI:18420"/>
    </ligand>
</feature>
<feature type="binding site" evidence="1">
    <location>
        <position position="245"/>
    </location>
    <ligand>
        <name>Mg(2+)</name>
        <dbReference type="ChEBI" id="CHEBI:18420"/>
    </ligand>
</feature>
<feature type="modified residue" description="Phosphoserine" evidence="1">
    <location>
        <position position="104"/>
    </location>
</feature>
<dbReference type="EC" id="5.4.2.10" evidence="1"/>
<dbReference type="EMBL" id="CP000474">
    <property type="protein sequence ID" value="ABM10179.1"/>
    <property type="molecule type" value="Genomic_DNA"/>
</dbReference>
<dbReference type="RefSeq" id="WP_011775552.1">
    <property type="nucleotide sequence ID" value="NC_008711.1"/>
</dbReference>
<dbReference type="SMR" id="A1R8Q0"/>
<dbReference type="STRING" id="290340.AAur_2903"/>
<dbReference type="KEGG" id="aau:AAur_2903"/>
<dbReference type="eggNOG" id="COG1109">
    <property type="taxonomic scope" value="Bacteria"/>
</dbReference>
<dbReference type="HOGENOM" id="CLU_016950_7_0_11"/>
<dbReference type="OrthoDB" id="9803322at2"/>
<dbReference type="Proteomes" id="UP000000637">
    <property type="component" value="Chromosome"/>
</dbReference>
<dbReference type="GO" id="GO:0005829">
    <property type="term" value="C:cytosol"/>
    <property type="evidence" value="ECO:0007669"/>
    <property type="project" value="TreeGrafter"/>
</dbReference>
<dbReference type="GO" id="GO:0000287">
    <property type="term" value="F:magnesium ion binding"/>
    <property type="evidence" value="ECO:0007669"/>
    <property type="project" value="UniProtKB-UniRule"/>
</dbReference>
<dbReference type="GO" id="GO:0008966">
    <property type="term" value="F:phosphoglucosamine mutase activity"/>
    <property type="evidence" value="ECO:0007669"/>
    <property type="project" value="UniProtKB-UniRule"/>
</dbReference>
<dbReference type="GO" id="GO:0004615">
    <property type="term" value="F:phosphomannomutase activity"/>
    <property type="evidence" value="ECO:0007669"/>
    <property type="project" value="TreeGrafter"/>
</dbReference>
<dbReference type="GO" id="GO:0005975">
    <property type="term" value="P:carbohydrate metabolic process"/>
    <property type="evidence" value="ECO:0007669"/>
    <property type="project" value="InterPro"/>
</dbReference>
<dbReference type="GO" id="GO:0009252">
    <property type="term" value="P:peptidoglycan biosynthetic process"/>
    <property type="evidence" value="ECO:0007669"/>
    <property type="project" value="TreeGrafter"/>
</dbReference>
<dbReference type="GO" id="GO:0006048">
    <property type="term" value="P:UDP-N-acetylglucosamine biosynthetic process"/>
    <property type="evidence" value="ECO:0007669"/>
    <property type="project" value="TreeGrafter"/>
</dbReference>
<dbReference type="CDD" id="cd05802">
    <property type="entry name" value="GlmM"/>
    <property type="match status" value="1"/>
</dbReference>
<dbReference type="FunFam" id="3.30.310.50:FF:000001">
    <property type="entry name" value="Phosphoglucosamine mutase"/>
    <property type="match status" value="1"/>
</dbReference>
<dbReference type="FunFam" id="3.40.120.10:FF:000001">
    <property type="entry name" value="Phosphoglucosamine mutase"/>
    <property type="match status" value="1"/>
</dbReference>
<dbReference type="FunFam" id="3.40.120.10:FF:000002">
    <property type="entry name" value="Phosphoglucosamine mutase"/>
    <property type="match status" value="1"/>
</dbReference>
<dbReference type="Gene3D" id="3.40.120.10">
    <property type="entry name" value="Alpha-D-Glucose-1,6-Bisphosphate, subunit A, domain 3"/>
    <property type="match status" value="3"/>
</dbReference>
<dbReference type="Gene3D" id="3.30.310.50">
    <property type="entry name" value="Alpha-D-phosphohexomutase, C-terminal domain"/>
    <property type="match status" value="1"/>
</dbReference>
<dbReference type="HAMAP" id="MF_01554_B">
    <property type="entry name" value="GlmM_B"/>
    <property type="match status" value="1"/>
</dbReference>
<dbReference type="InterPro" id="IPR005844">
    <property type="entry name" value="A-D-PHexomutase_a/b/a-I"/>
</dbReference>
<dbReference type="InterPro" id="IPR016055">
    <property type="entry name" value="A-D-PHexomutase_a/b/a-I/II/III"/>
</dbReference>
<dbReference type="InterPro" id="IPR005845">
    <property type="entry name" value="A-D-PHexomutase_a/b/a-II"/>
</dbReference>
<dbReference type="InterPro" id="IPR005846">
    <property type="entry name" value="A-D-PHexomutase_a/b/a-III"/>
</dbReference>
<dbReference type="InterPro" id="IPR005843">
    <property type="entry name" value="A-D-PHexomutase_C"/>
</dbReference>
<dbReference type="InterPro" id="IPR036900">
    <property type="entry name" value="A-D-PHexomutase_C_sf"/>
</dbReference>
<dbReference type="InterPro" id="IPR016066">
    <property type="entry name" value="A-D-PHexomutase_CS"/>
</dbReference>
<dbReference type="InterPro" id="IPR005841">
    <property type="entry name" value="Alpha-D-phosphohexomutase_SF"/>
</dbReference>
<dbReference type="InterPro" id="IPR006352">
    <property type="entry name" value="GlmM_bact"/>
</dbReference>
<dbReference type="InterPro" id="IPR050060">
    <property type="entry name" value="Phosphoglucosamine_mutase"/>
</dbReference>
<dbReference type="NCBIfam" id="TIGR01455">
    <property type="entry name" value="glmM"/>
    <property type="match status" value="1"/>
</dbReference>
<dbReference type="PANTHER" id="PTHR42946:SF1">
    <property type="entry name" value="PHOSPHOGLUCOMUTASE (ALPHA-D-GLUCOSE-1,6-BISPHOSPHATE-DEPENDENT)"/>
    <property type="match status" value="1"/>
</dbReference>
<dbReference type="PANTHER" id="PTHR42946">
    <property type="entry name" value="PHOSPHOHEXOSE MUTASE"/>
    <property type="match status" value="1"/>
</dbReference>
<dbReference type="Pfam" id="PF02878">
    <property type="entry name" value="PGM_PMM_I"/>
    <property type="match status" value="1"/>
</dbReference>
<dbReference type="Pfam" id="PF02879">
    <property type="entry name" value="PGM_PMM_II"/>
    <property type="match status" value="1"/>
</dbReference>
<dbReference type="Pfam" id="PF02880">
    <property type="entry name" value="PGM_PMM_III"/>
    <property type="match status" value="1"/>
</dbReference>
<dbReference type="Pfam" id="PF00408">
    <property type="entry name" value="PGM_PMM_IV"/>
    <property type="match status" value="1"/>
</dbReference>
<dbReference type="PRINTS" id="PR00509">
    <property type="entry name" value="PGMPMM"/>
</dbReference>
<dbReference type="SUPFAM" id="SSF55957">
    <property type="entry name" value="Phosphoglucomutase, C-terminal domain"/>
    <property type="match status" value="1"/>
</dbReference>
<dbReference type="SUPFAM" id="SSF53738">
    <property type="entry name" value="Phosphoglucomutase, first 3 domains"/>
    <property type="match status" value="3"/>
</dbReference>
<dbReference type="PROSITE" id="PS00710">
    <property type="entry name" value="PGM_PMM"/>
    <property type="match status" value="1"/>
</dbReference>
<organism>
    <name type="scientific">Paenarthrobacter aurescens (strain TC1)</name>
    <dbReference type="NCBI Taxonomy" id="290340"/>
    <lineage>
        <taxon>Bacteria</taxon>
        <taxon>Bacillati</taxon>
        <taxon>Actinomycetota</taxon>
        <taxon>Actinomycetes</taxon>
        <taxon>Micrococcales</taxon>
        <taxon>Micrococcaceae</taxon>
        <taxon>Paenarthrobacter</taxon>
    </lineage>
</organism>
<name>GLMM_PAEAT</name>
<sequence>MSRLFGTDGVRGLANGLLTAELAMQLAQAAAVVLGHDRTTDGKRPRAVVARDPRASGEFLAAAVEAGLSSSGIDVYDAGVLPTPAAAYLVADLDADFGVMLSASHNPAPDNGIKFFARGGQKLPDDVEDAIEAQLGKEPQRPVGADVGRIQRFSDAEDRYIVHLLGTLPKRLEGLKVVLDCAHGAASGCSPQVFKDAGAEVVVIGAEPDGLNINDGVGSTHLGPLKEAVVKHGADLGVAHDGDADRCLAVDHEGNEVDGDQIMAILALALKEAGKLKDNILVATVMSNLGLKIALRDAGITIRETGVGDRYVLEEMRDGGYNLGGEQSGHVIFSDFATTGDGVLTGLQLAAQVALTGRSLKDLSSAMTKLPQLMINVKDVDKARAATDEGVAEAVAAAELELGETGRVLLRPSGTEALVRVMVEAADMETAERICKGLAAVVKERLGAPSELAV</sequence>
<keyword id="KW-0413">Isomerase</keyword>
<keyword id="KW-0460">Magnesium</keyword>
<keyword id="KW-0479">Metal-binding</keyword>
<keyword id="KW-0597">Phosphoprotein</keyword>
<proteinExistence type="inferred from homology"/>
<evidence type="ECO:0000255" key="1">
    <source>
        <dbReference type="HAMAP-Rule" id="MF_01554"/>
    </source>
</evidence>
<comment type="function">
    <text evidence="1">Catalyzes the conversion of glucosamine-6-phosphate to glucosamine-1-phosphate.</text>
</comment>
<comment type="catalytic activity">
    <reaction evidence="1">
        <text>alpha-D-glucosamine 1-phosphate = D-glucosamine 6-phosphate</text>
        <dbReference type="Rhea" id="RHEA:23424"/>
        <dbReference type="ChEBI" id="CHEBI:58516"/>
        <dbReference type="ChEBI" id="CHEBI:58725"/>
        <dbReference type="EC" id="5.4.2.10"/>
    </reaction>
</comment>
<comment type="cofactor">
    <cofactor evidence="1">
        <name>Mg(2+)</name>
        <dbReference type="ChEBI" id="CHEBI:18420"/>
    </cofactor>
    <text evidence="1">Binds 1 Mg(2+) ion per subunit.</text>
</comment>
<comment type="PTM">
    <text evidence="1">Activated by phosphorylation.</text>
</comment>
<comment type="similarity">
    <text evidence="1">Belongs to the phosphohexose mutase family.</text>
</comment>
<reference key="1">
    <citation type="journal article" date="2006" name="PLoS Genet.">
        <title>Secrets of soil survival revealed by the genome sequence of Arthrobacter aurescens TC1.</title>
        <authorList>
            <person name="Mongodin E.F."/>
            <person name="Shapir N."/>
            <person name="Daugherty S.C."/>
            <person name="DeBoy R.T."/>
            <person name="Emerson J.B."/>
            <person name="Shvartzbeyn A."/>
            <person name="Radune D."/>
            <person name="Vamathevan J."/>
            <person name="Riggs F."/>
            <person name="Grinberg V."/>
            <person name="Khouri H.M."/>
            <person name="Wackett L.P."/>
            <person name="Nelson K.E."/>
            <person name="Sadowsky M.J."/>
        </authorList>
    </citation>
    <scope>NUCLEOTIDE SEQUENCE [LARGE SCALE GENOMIC DNA]</scope>
    <source>
        <strain>TC1</strain>
    </source>
</reference>
<accession>A1R8Q0</accession>
<gene>
    <name evidence="1" type="primary">glmM</name>
    <name type="ordered locus">AAur_2903</name>
</gene>